<geneLocation type="chloroplast"/>
<proteinExistence type="inferred from homology"/>
<evidence type="ECO:0000255" key="1">
    <source>
        <dbReference type="HAMAP-Rule" id="MF_01321"/>
    </source>
</evidence>
<dbReference type="EC" id="2.7.7.6" evidence="1"/>
<dbReference type="EMBL" id="AY757819">
    <property type="protein sequence ID" value="AAV74361.1"/>
    <property type="molecule type" value="Genomic_DNA"/>
</dbReference>
<dbReference type="GO" id="GO:0009507">
    <property type="term" value="C:chloroplast"/>
    <property type="evidence" value="ECO:0007669"/>
    <property type="project" value="UniProtKB-SubCell"/>
</dbReference>
<dbReference type="GO" id="GO:0000428">
    <property type="term" value="C:DNA-directed RNA polymerase complex"/>
    <property type="evidence" value="ECO:0007669"/>
    <property type="project" value="UniProtKB-KW"/>
</dbReference>
<dbReference type="GO" id="GO:0005739">
    <property type="term" value="C:mitochondrion"/>
    <property type="evidence" value="ECO:0007669"/>
    <property type="project" value="GOC"/>
</dbReference>
<dbReference type="GO" id="GO:0003677">
    <property type="term" value="F:DNA binding"/>
    <property type="evidence" value="ECO:0007669"/>
    <property type="project" value="UniProtKB-UniRule"/>
</dbReference>
<dbReference type="GO" id="GO:0003899">
    <property type="term" value="F:DNA-directed RNA polymerase activity"/>
    <property type="evidence" value="ECO:0007669"/>
    <property type="project" value="UniProtKB-UniRule"/>
</dbReference>
<dbReference type="GO" id="GO:0032549">
    <property type="term" value="F:ribonucleoside binding"/>
    <property type="evidence" value="ECO:0007669"/>
    <property type="project" value="InterPro"/>
</dbReference>
<dbReference type="GO" id="GO:0006351">
    <property type="term" value="P:DNA-templated transcription"/>
    <property type="evidence" value="ECO:0007669"/>
    <property type="project" value="UniProtKB-UniRule"/>
</dbReference>
<dbReference type="CDD" id="cd00653">
    <property type="entry name" value="RNA_pol_B_RPB2"/>
    <property type="match status" value="1"/>
</dbReference>
<dbReference type="FunFam" id="3.90.1110.10:FF:000009">
    <property type="entry name" value="DNA-directed RNA polymerase subunit beta"/>
    <property type="match status" value="1"/>
</dbReference>
<dbReference type="Gene3D" id="2.40.50.100">
    <property type="match status" value="1"/>
</dbReference>
<dbReference type="Gene3D" id="2.40.50.150">
    <property type="match status" value="1"/>
</dbReference>
<dbReference type="Gene3D" id="3.90.1100.10">
    <property type="match status" value="1"/>
</dbReference>
<dbReference type="Gene3D" id="2.30.150.10">
    <property type="entry name" value="DNA-directed RNA polymerase, beta subunit, external 1 domain"/>
    <property type="match status" value="1"/>
</dbReference>
<dbReference type="Gene3D" id="2.40.270.10">
    <property type="entry name" value="DNA-directed RNA polymerase, subunit 2, domain 6"/>
    <property type="match status" value="2"/>
</dbReference>
<dbReference type="Gene3D" id="3.90.1800.10">
    <property type="entry name" value="RNA polymerase alpha subunit dimerisation domain"/>
    <property type="match status" value="1"/>
</dbReference>
<dbReference type="Gene3D" id="3.90.1110.10">
    <property type="entry name" value="RNA polymerase Rpb2, domain 2"/>
    <property type="match status" value="1"/>
</dbReference>
<dbReference type="HAMAP" id="MF_01321">
    <property type="entry name" value="RNApol_bact_RpoB"/>
    <property type="match status" value="1"/>
</dbReference>
<dbReference type="InterPro" id="IPR042107">
    <property type="entry name" value="DNA-dir_RNA_pol_bsu_ext_1_sf"/>
</dbReference>
<dbReference type="InterPro" id="IPR015712">
    <property type="entry name" value="DNA-dir_RNA_pol_su2"/>
</dbReference>
<dbReference type="InterPro" id="IPR007120">
    <property type="entry name" value="DNA-dir_RNAP_su2_dom"/>
</dbReference>
<dbReference type="InterPro" id="IPR037033">
    <property type="entry name" value="DNA-dir_RNAP_su2_hyb_sf"/>
</dbReference>
<dbReference type="InterPro" id="IPR010243">
    <property type="entry name" value="RNA_pol_bsu_bac"/>
</dbReference>
<dbReference type="InterPro" id="IPR007121">
    <property type="entry name" value="RNA_pol_bsu_CS"/>
</dbReference>
<dbReference type="InterPro" id="IPR007642">
    <property type="entry name" value="RNA_pol_Rpb2_2"/>
</dbReference>
<dbReference type="InterPro" id="IPR037034">
    <property type="entry name" value="RNA_pol_Rpb2_2_sf"/>
</dbReference>
<dbReference type="InterPro" id="IPR007645">
    <property type="entry name" value="RNA_pol_Rpb2_3"/>
</dbReference>
<dbReference type="InterPro" id="IPR007641">
    <property type="entry name" value="RNA_pol_Rpb2_7"/>
</dbReference>
<dbReference type="InterPro" id="IPR014724">
    <property type="entry name" value="RNA_pol_RPB2_OB-fold"/>
</dbReference>
<dbReference type="NCBIfam" id="NF001616">
    <property type="entry name" value="PRK00405.1"/>
    <property type="match status" value="1"/>
</dbReference>
<dbReference type="PANTHER" id="PTHR20856">
    <property type="entry name" value="DNA-DIRECTED RNA POLYMERASE I SUBUNIT 2"/>
    <property type="match status" value="1"/>
</dbReference>
<dbReference type="Pfam" id="PF04561">
    <property type="entry name" value="RNA_pol_Rpb2_2"/>
    <property type="match status" value="1"/>
</dbReference>
<dbReference type="Pfam" id="PF04565">
    <property type="entry name" value="RNA_pol_Rpb2_3"/>
    <property type="match status" value="1"/>
</dbReference>
<dbReference type="Pfam" id="PF00562">
    <property type="entry name" value="RNA_pol_Rpb2_6"/>
    <property type="match status" value="1"/>
</dbReference>
<dbReference type="Pfam" id="PF04560">
    <property type="entry name" value="RNA_pol_Rpb2_7"/>
    <property type="match status" value="1"/>
</dbReference>
<dbReference type="SUPFAM" id="SSF64484">
    <property type="entry name" value="beta and beta-prime subunits of DNA dependent RNA-polymerase"/>
    <property type="match status" value="1"/>
</dbReference>
<dbReference type="PROSITE" id="PS01166">
    <property type="entry name" value="RNA_POL_BETA"/>
    <property type="match status" value="1"/>
</dbReference>
<gene>
    <name evidence="1" type="primary">rpoB</name>
</gene>
<feature type="chain" id="PRO_0000048007" description="DNA-directed RNA polymerase subunit beta">
    <location>
        <begin position="1"/>
        <end position="1071"/>
    </location>
</feature>
<keyword id="KW-0150">Chloroplast</keyword>
<keyword id="KW-0240">DNA-directed RNA polymerase</keyword>
<keyword id="KW-0548">Nucleotidyltransferase</keyword>
<keyword id="KW-0934">Plastid</keyword>
<keyword id="KW-0804">Transcription</keyword>
<keyword id="KW-0808">Transferase</keyword>
<reference key="1">
    <citation type="journal article" date="2004" name="BMC Evol. Biol.">
        <title>Long branch attraction, taxon sampling, and the earliest angiosperms: Amborella or monocots?</title>
        <authorList>
            <person name="Stefanovic S."/>
            <person name="Rice D.W."/>
            <person name="Palmer J.D."/>
        </authorList>
    </citation>
    <scope>NUCLEOTIDE SEQUENCE [GENOMIC DNA]</scope>
</reference>
<name>RPOB_ACOGR</name>
<accession>Q5QA72</accession>
<comment type="function">
    <text evidence="1">DNA-dependent RNA polymerase catalyzes the transcription of DNA into RNA using the four ribonucleoside triphosphates as substrates.</text>
</comment>
<comment type="catalytic activity">
    <reaction evidence="1">
        <text>RNA(n) + a ribonucleoside 5'-triphosphate = RNA(n+1) + diphosphate</text>
        <dbReference type="Rhea" id="RHEA:21248"/>
        <dbReference type="Rhea" id="RHEA-COMP:14527"/>
        <dbReference type="Rhea" id="RHEA-COMP:17342"/>
        <dbReference type="ChEBI" id="CHEBI:33019"/>
        <dbReference type="ChEBI" id="CHEBI:61557"/>
        <dbReference type="ChEBI" id="CHEBI:140395"/>
        <dbReference type="EC" id="2.7.7.6"/>
    </reaction>
</comment>
<comment type="subunit">
    <text evidence="1">In plastids the minimal PEP RNA polymerase catalytic core is composed of four subunits: alpha, beta, beta', and beta''. When a (nuclear-encoded) sigma factor is associated with the core the holoenzyme is formed, which can initiate transcription.</text>
</comment>
<comment type="subcellular location">
    <subcellularLocation>
        <location>Plastid</location>
        <location>Chloroplast</location>
    </subcellularLocation>
</comment>
<comment type="similarity">
    <text evidence="1">Belongs to the RNA polymerase beta chain family.</text>
</comment>
<sequence length="1071" mass="120968">MPRDGNEGMFTIPGFSQIQFEGFCRFVDQGLMEEFHKFPKIEDTDQEIEFQLFVERYQLVEPLIKERDAVYESLTYSSELYVPAGLIWKTGRDMQEQTIFIGNIPLMNSLGTFIVNGIYRIVINQILQSPGIYYRSELDHNGISVYTSTIISDWGGRSELEIDRKSRIWARVSRKQKISILVLSSAMGSNLREILDNVCYPEIFLSFLNDREKKKIGSKENAILEFYQQFACVGGDPVFSESLCKELQKKFFQQRCELGRIGRRNMNRRLNLDIPQSNTFLLPRDVLAAADHLIGMKFGMGTLDDMNHLKNKRIRSVADLLQDQFGLALVRLENAVRGTICGAIRHKLILTPQNLVSSTSLTTTYESFFGLHPLSQVLDRTNPLTQIVHGRKLSYLGPGGLTGRTASFRIRDIHPSHYGRICPIDTSEGINVGLIGSLAIHARIGHWGSIESPFYEVYQRSKETKMVFLSPSRDEYYTVATGNSLALNRGGIQEEQIVPARYRQEFLTIAWEQIHLRSIFPFQYFSIGASLIPFIEHNDANRALMSSNMQRQAVPLSRSXXXXXXXXXXXXAALDSGVSAIAECEGKIIYTDTHKIVLSGHGDTISIPLVMYQRSNKNTCMHQNPQVRRGKCIKKGQILADGAATVGGELALGKNVLVAYMPWEGYNFEDAVLISERLVYEDIYTSFHIRKYEIQTHVTSQGPERITHEIPHLEAHLLRNLDRNGIVALGSWVETGDILVGKLTPQTANESSYAPEDRLLRAILGIQVSTAKETCLKLPIGGRGRVIDVRWIQKKGGSSYNPETIRVYISQKREIKVGDKVAGRHGNKGIISKILSRQDMPYLQDGTPVDMVFNPLGVPSRMNVGQIFECSLGLAGDLLDRHYRIAPFDERYEQEASRKLVFSELYEASKQTANPWVFEPEYPGKSRIFDGRTGDPFEQPVLIGKSYILKLIHQVDDKIHGRSSGHYALVTQQPLRGRAKQGGQRVGEMEVWALEGFGVAHILQEMLTYKSDHIRARQEVLGTTIIGGTIPTPEDAPESFRLLVRELRSLALELNHFLVSEKNFQINRKEA</sequence>
<protein>
    <recommendedName>
        <fullName evidence="1">DNA-directed RNA polymerase subunit beta</fullName>
        <ecNumber evidence="1">2.7.7.6</ecNumber>
    </recommendedName>
    <alternativeName>
        <fullName evidence="1">PEP</fullName>
    </alternativeName>
    <alternativeName>
        <fullName evidence="1">Plastid-encoded RNA polymerase subunit beta</fullName>
        <shortName evidence="1">RNA polymerase subunit beta</shortName>
    </alternativeName>
</protein>
<organism>
    <name type="scientific">Acorus gramineus</name>
    <name type="common">Dwarf sweet flag</name>
    <dbReference type="NCBI Taxonomy" id="55184"/>
    <lineage>
        <taxon>Eukaryota</taxon>
        <taxon>Viridiplantae</taxon>
        <taxon>Streptophyta</taxon>
        <taxon>Embryophyta</taxon>
        <taxon>Tracheophyta</taxon>
        <taxon>Spermatophyta</taxon>
        <taxon>Magnoliopsida</taxon>
        <taxon>Liliopsida</taxon>
        <taxon>Acoraceae</taxon>
        <taxon>Acorus</taxon>
    </lineage>
</organism>